<feature type="chain" id="PRO_0000431422" description="G patch domain-containing protein TGH">
    <location>
        <begin position="1"/>
        <end position="930"/>
    </location>
</feature>
<feature type="domain" description="G-patch" evidence="1">
    <location>
        <begin position="159"/>
        <end position="199"/>
    </location>
</feature>
<feature type="repeat" description="SURP motif" evidence="2">
    <location>
        <begin position="405"/>
        <end position="447"/>
    </location>
</feature>
<feature type="region of interest" description="Disordered" evidence="3">
    <location>
        <begin position="76"/>
        <end position="152"/>
    </location>
</feature>
<feature type="region of interest" description="Disordered" evidence="3">
    <location>
        <begin position="478"/>
        <end position="508"/>
    </location>
</feature>
<feature type="region of interest" description="Disordered" evidence="3">
    <location>
        <begin position="687"/>
        <end position="751"/>
    </location>
</feature>
<feature type="region of interest" description="Disordered" evidence="3">
    <location>
        <begin position="773"/>
        <end position="930"/>
    </location>
</feature>
<feature type="compositionally biased region" description="Basic and acidic residues" evidence="3">
    <location>
        <begin position="489"/>
        <end position="498"/>
    </location>
</feature>
<feature type="compositionally biased region" description="Polar residues" evidence="3">
    <location>
        <begin position="499"/>
        <end position="508"/>
    </location>
</feature>
<feature type="compositionally biased region" description="Acidic residues" evidence="3">
    <location>
        <begin position="701"/>
        <end position="711"/>
    </location>
</feature>
<feature type="compositionally biased region" description="Basic and acidic residues" evidence="3">
    <location>
        <begin position="779"/>
        <end position="808"/>
    </location>
</feature>
<feature type="compositionally biased region" description="Basic residues" evidence="3">
    <location>
        <begin position="848"/>
        <end position="857"/>
    </location>
</feature>
<feature type="compositionally biased region" description="Basic and acidic residues" evidence="3">
    <location>
        <begin position="858"/>
        <end position="877"/>
    </location>
</feature>
<feature type="compositionally biased region" description="Basic residues" evidence="3">
    <location>
        <begin position="892"/>
        <end position="908"/>
    </location>
</feature>
<feature type="compositionally biased region" description="Basic and acidic residues" evidence="3">
    <location>
        <begin position="913"/>
        <end position="923"/>
    </location>
</feature>
<feature type="cross-link" description="Glycyl lysine isopeptide (Lys-Gly) (interchain with G-Cter in ubiquitin)" evidence="9">
    <location>
        <position position="25"/>
    </location>
</feature>
<feature type="splice variant" id="VSP_057258" description="In isoform 2.">
    <location>
        <begin position="258"/>
        <end position="287"/>
    </location>
</feature>
<name>TGH_ARATH</name>
<sequence length="930" mass="104934">MGSDEEDFVFHGTPIEREEEIASRKKKAVAGASGNLRTLPAWKQEVTDEEGRRRFHGAFTGGYSAGYYNTVGSKEGWAPQSFTSSRQNRAGARKQSISDFLDEDEKADMEGKSLSASSQFDTFGFTAAEHSRKHAEKEQHERPSAIPGPVPDELVAPVSESIGVKLLLKMGWRRGHSIKEVRASSDARREARKAFLAFYTDENTKETPDSLVSETEVETSLGEDIKISESTPVYVLNPKQDLHGLGYDPFKHAPEFREKKRSRMSANKEVGFRKPLSMKESLFGPKSGKIAPGFGIGALEELDVEDEDVYAGYDFDQTYVIEDEQPARQSNDNRLRLTSKEHDVLPGFGAAKNSDYSMERFNPPIIPKDFVARHKFSGPLEAETKPTVSAPPEVPPPADNNLKLLIEGFATFVSRCGKLYEDLSREKNQSNQLFDFLREGNGHDYYARRLWEEQQKRKDQSKLTLDVKVSPTVQKMTAETRGSLLGEKPLQRSLKETDTSASSGGSFQFPTNLSDTFTKSASSQEAADAVKPFKDDPAKQERFEQFLKEKYKGGLRTTDSNRVNSMSESARAQERLDFEAAAEAIEKGKAYKEVRRATEQPLDFLAGGLQFTSGGTEQIKDTGVVDMKSSKTYPKREEFQWRPSPLLCKRFDLPDPFMGKLPPAPRARNKMDSLVFLPDTVKAASARQVSESQVPKKETSIEEPEVEVEVENVERPVDLYKAIFSDDSEDDEDQPMNGKIQEGQEKKNEAAATTLNRLIAGDFLESLGKELGFEVPMEEEIKSRSKPEDSSDKRLDRPGLKEKVEEKTSSLTLGSEEEKSRKKREKSPGKRSGGNDLSSSESSGDERRRKRYNKKDRHRNDSESDSSSDYHSRDKQGSRSRSKRRESSREKRSSHKKHSKHRRTKKSSSSRYSSDEEQKESRREKKRRRD</sequence>
<dbReference type="EMBL" id="AY518689">
    <property type="protein sequence ID" value="AAR99647.1"/>
    <property type="molecule type" value="mRNA"/>
</dbReference>
<dbReference type="EMBL" id="AB006708">
    <property type="protein sequence ID" value="BAB09825.1"/>
    <property type="molecule type" value="Genomic_DNA"/>
</dbReference>
<dbReference type="EMBL" id="CP002688">
    <property type="protein sequence ID" value="AED93116.1"/>
    <property type="molecule type" value="Genomic_DNA"/>
</dbReference>
<dbReference type="EMBL" id="CP002688">
    <property type="protein sequence ID" value="AED93117.1"/>
    <property type="molecule type" value="Genomic_DNA"/>
</dbReference>
<dbReference type="EMBL" id="AK118129">
    <property type="protein sequence ID" value="BAC42755.1"/>
    <property type="molecule type" value="mRNA"/>
</dbReference>
<dbReference type="EMBL" id="BT008588">
    <property type="protein sequence ID" value="AAP40415.1"/>
    <property type="molecule type" value="mRNA"/>
</dbReference>
<dbReference type="RefSeq" id="NP_001031926.1">
    <molecule id="Q8GXN9-2"/>
    <property type="nucleotide sequence ID" value="NM_001036849.2"/>
</dbReference>
<dbReference type="RefSeq" id="NP_197699.2">
    <molecule id="Q8GXN9-1"/>
    <property type="nucleotide sequence ID" value="NM_122214.4"/>
</dbReference>
<dbReference type="SMR" id="Q8GXN9"/>
<dbReference type="FunCoup" id="Q8GXN9">
    <property type="interactions" value="3589"/>
</dbReference>
<dbReference type="IntAct" id="Q8GXN9">
    <property type="interactions" value="1"/>
</dbReference>
<dbReference type="STRING" id="3702.Q8GXN9"/>
<dbReference type="GlyGen" id="Q8GXN9">
    <property type="glycosylation" value="2 sites, 1 O-linked glycan (2 sites)"/>
</dbReference>
<dbReference type="iPTMnet" id="Q8GXN9"/>
<dbReference type="PaxDb" id="3702-AT5G23080.1"/>
<dbReference type="ProteomicsDB" id="246474">
    <molecule id="Q8GXN9-1"/>
</dbReference>
<dbReference type="EnsemblPlants" id="AT5G23080.1">
    <molecule id="Q8GXN9-1"/>
    <property type="protein sequence ID" value="AT5G23080.1"/>
    <property type="gene ID" value="AT5G23080"/>
</dbReference>
<dbReference type="EnsemblPlants" id="AT5G23080.2">
    <molecule id="Q8GXN9-2"/>
    <property type="protein sequence ID" value="AT5G23080.2"/>
    <property type="gene ID" value="AT5G23080"/>
</dbReference>
<dbReference type="GeneID" id="832372"/>
<dbReference type="Gramene" id="AT5G23080.1">
    <molecule id="Q8GXN9-1"/>
    <property type="protein sequence ID" value="AT5G23080.1"/>
    <property type="gene ID" value="AT5G23080"/>
</dbReference>
<dbReference type="Gramene" id="AT5G23080.2">
    <molecule id="Q8GXN9-2"/>
    <property type="protein sequence ID" value="AT5G23080.2"/>
    <property type="gene ID" value="AT5G23080"/>
</dbReference>
<dbReference type="KEGG" id="ath:AT5G23080"/>
<dbReference type="Araport" id="AT5G23080"/>
<dbReference type="TAIR" id="AT5G23080">
    <property type="gene designation" value="TGH"/>
</dbReference>
<dbReference type="eggNOG" id="KOG2138">
    <property type="taxonomic scope" value="Eukaryota"/>
</dbReference>
<dbReference type="InParanoid" id="Q8GXN9"/>
<dbReference type="OMA" id="DQQKPDT"/>
<dbReference type="PhylomeDB" id="Q8GXN9"/>
<dbReference type="PRO" id="PR:Q8GXN9"/>
<dbReference type="Proteomes" id="UP000006548">
    <property type="component" value="Chromosome 5"/>
</dbReference>
<dbReference type="ExpressionAtlas" id="Q8GXN9">
    <property type="expression patterns" value="baseline and differential"/>
</dbReference>
<dbReference type="GO" id="GO:0016607">
    <property type="term" value="C:nuclear speck"/>
    <property type="evidence" value="ECO:0007669"/>
    <property type="project" value="UniProtKB-SubCell"/>
</dbReference>
<dbReference type="GO" id="GO:0005634">
    <property type="term" value="C:nucleus"/>
    <property type="evidence" value="ECO:0000314"/>
    <property type="project" value="TAIR"/>
</dbReference>
<dbReference type="GO" id="GO:0070883">
    <property type="term" value="F:pre-miRNA binding"/>
    <property type="evidence" value="ECO:0000314"/>
    <property type="project" value="TAIR"/>
</dbReference>
<dbReference type="GO" id="GO:0070878">
    <property type="term" value="F:primary miRNA binding"/>
    <property type="evidence" value="ECO:0000314"/>
    <property type="project" value="TAIR"/>
</dbReference>
<dbReference type="GO" id="GO:0003723">
    <property type="term" value="F:RNA binding"/>
    <property type="evidence" value="ECO:0000304"/>
    <property type="project" value="TAIR"/>
</dbReference>
<dbReference type="GO" id="GO:0035196">
    <property type="term" value="P:miRNA processing"/>
    <property type="evidence" value="ECO:0000315"/>
    <property type="project" value="TAIR"/>
</dbReference>
<dbReference type="GO" id="GO:0006397">
    <property type="term" value="P:mRNA processing"/>
    <property type="evidence" value="ECO:0007669"/>
    <property type="project" value="UniProtKB-KW"/>
</dbReference>
<dbReference type="GO" id="GO:0010087">
    <property type="term" value="P:phloem or xylem histogenesis"/>
    <property type="evidence" value="ECO:0000315"/>
    <property type="project" value="TAIR"/>
</dbReference>
<dbReference type="GO" id="GO:0006396">
    <property type="term" value="P:RNA processing"/>
    <property type="evidence" value="ECO:0000304"/>
    <property type="project" value="TAIR"/>
</dbReference>
<dbReference type="GO" id="GO:0030422">
    <property type="term" value="P:siRNA processing"/>
    <property type="evidence" value="ECO:0000315"/>
    <property type="project" value="TAIR"/>
</dbReference>
<dbReference type="FunFam" id="1.10.10.790:FF:000012">
    <property type="entry name" value="G patch domain-containing protein TGH"/>
    <property type="match status" value="1"/>
</dbReference>
<dbReference type="Gene3D" id="1.10.10.790">
    <property type="entry name" value="Surp module"/>
    <property type="match status" value="1"/>
</dbReference>
<dbReference type="InterPro" id="IPR011666">
    <property type="entry name" value="DUF1604"/>
</dbReference>
<dbReference type="InterPro" id="IPR000061">
    <property type="entry name" value="Surp"/>
</dbReference>
<dbReference type="InterPro" id="IPR035967">
    <property type="entry name" value="SWAP/Surp_sf"/>
</dbReference>
<dbReference type="PANTHER" id="PTHR13384">
    <property type="entry name" value="G PATCH DOMAIN-CONTAINING PROTEIN 1"/>
    <property type="match status" value="1"/>
</dbReference>
<dbReference type="PANTHER" id="PTHR13384:SF19">
    <property type="entry name" value="G PATCH DOMAIN-CONTAINING PROTEIN 1"/>
    <property type="match status" value="1"/>
</dbReference>
<dbReference type="Pfam" id="PF07713">
    <property type="entry name" value="DUF1604"/>
    <property type="match status" value="1"/>
</dbReference>
<dbReference type="Pfam" id="PF01805">
    <property type="entry name" value="Surp"/>
    <property type="match status" value="1"/>
</dbReference>
<dbReference type="SMART" id="SM00648">
    <property type="entry name" value="SWAP"/>
    <property type="match status" value="1"/>
</dbReference>
<dbReference type="SUPFAM" id="SSF109905">
    <property type="entry name" value="Surp module (SWAP domain)"/>
    <property type="match status" value="1"/>
</dbReference>
<dbReference type="PROSITE" id="PS50128">
    <property type="entry name" value="SURP"/>
    <property type="match status" value="1"/>
</dbReference>
<organism>
    <name type="scientific">Arabidopsis thaliana</name>
    <name type="common">Mouse-ear cress</name>
    <dbReference type="NCBI Taxonomy" id="3702"/>
    <lineage>
        <taxon>Eukaryota</taxon>
        <taxon>Viridiplantae</taxon>
        <taxon>Streptophyta</taxon>
        <taxon>Embryophyta</taxon>
        <taxon>Tracheophyta</taxon>
        <taxon>Spermatophyta</taxon>
        <taxon>Magnoliopsida</taxon>
        <taxon>eudicotyledons</taxon>
        <taxon>Gunneridae</taxon>
        <taxon>Pentapetalae</taxon>
        <taxon>rosids</taxon>
        <taxon>malvids</taxon>
        <taxon>Brassicales</taxon>
        <taxon>Brassicaceae</taxon>
        <taxon>Camelineae</taxon>
        <taxon>Arabidopsis</taxon>
    </lineage>
</organism>
<keyword id="KW-0025">Alternative splicing</keyword>
<keyword id="KW-0341">Growth regulation</keyword>
<keyword id="KW-1017">Isopeptide bond</keyword>
<keyword id="KW-0507">mRNA processing</keyword>
<keyword id="KW-0539">Nucleus</keyword>
<keyword id="KW-1185">Reference proteome</keyword>
<keyword id="KW-0694">RNA-binding</keyword>
<keyword id="KW-0943">RNA-mediated gene silencing</keyword>
<keyword id="KW-0832">Ubl conjugation</keyword>
<comment type="function">
    <text evidence="4 5">Functions as a component of microRNA (miRNA) and small interfering RNA (siRNA) biogenesis. May assist DCL1 and DCL4 to efficiently process and/or recruit the precursors of miRNAs and siRNAs. In the miRNA biogenesis pathway, associates with the DCL1 complex that processes primary miRNAs (pri-miRNAs) into miRNAs. Binds pri-miRNAs and precursor miRNAs (pre-miRNAs). Is required for the interaction between pri-miRNAs and DRB1 (PubMed:22802657). Required for general proper plant growth and, in particular, initiation of vascular development. Interacts genetically with AMP1, a glutamate carboxypeptidase involved in the regulation of meristem function (PubMed:16024589).</text>
</comment>
<comment type="subcellular location">
    <subcellularLocation>
        <location evidence="4">Nucleus speckle</location>
    </subcellularLocation>
    <subcellularLocation>
        <location evidence="4">Nucleus</location>
        <location evidence="4">Nucleoplasm</location>
    </subcellularLocation>
    <text evidence="4">Colocalizes with the splicing factor SR34 to subnuclear particles.</text>
</comment>
<comment type="alternative products">
    <event type="alternative splicing"/>
    <isoform>
        <id>Q8GXN9-1</id>
        <name>1</name>
        <sequence type="displayed"/>
    </isoform>
    <isoform>
        <id>Q8GXN9-2</id>
        <name>2</name>
        <sequence type="described" ref="VSP_057258"/>
    </isoform>
</comment>
<comment type="tissue specificity">
    <text evidence="4">Expressed in vasculature of cotyledons and leaves, young meristematic tissues, trichomes and pistils.</text>
</comment>
<comment type="disruption phenotype">
    <text evidence="4">Developmental defects, elongation defects of all organs, reduced plant height, triple cotyledons phenotype, reduced vascularization and infertility due to failure to produce pollen.</text>
</comment>
<proteinExistence type="evidence at protein level"/>
<reference key="1">
    <citation type="journal article" date="2005" name="Plant Cell">
        <title>The evolutionarily conserved TOUGH protein is required for proper development of Arabidopsis thaliana.</title>
        <authorList>
            <person name="Calderon-Villalobos L.I.A."/>
            <person name="Kuhnle C."/>
            <person name="Dohmann E.M.N."/>
            <person name="Li H."/>
            <person name="Bevan M."/>
            <person name="Schwechheimer C."/>
        </authorList>
    </citation>
    <scope>NUCLEOTIDE SEQUENCE [MRNA] (ISOFORM 2)</scope>
    <scope>FUNCTION</scope>
    <scope>SUBCELLULAR LOCATION</scope>
    <scope>TISSUE SPECIFICITY</scope>
    <scope>DISRUPTION PHENOTYPE</scope>
</reference>
<reference key="2">
    <citation type="journal article" date="1997" name="DNA Res.">
        <title>Structural analysis of Arabidopsis thaliana chromosome 5. II. Sequence features of the regions of 1,044,062 bp covered by thirteen physically assigned P1 clones.</title>
        <authorList>
            <person name="Kotani H."/>
            <person name="Nakamura Y."/>
            <person name="Sato S."/>
            <person name="Kaneko T."/>
            <person name="Asamizu E."/>
            <person name="Miyajima N."/>
            <person name="Tabata S."/>
        </authorList>
    </citation>
    <scope>NUCLEOTIDE SEQUENCE [LARGE SCALE GENOMIC DNA]</scope>
    <source>
        <strain>cv. Columbia</strain>
    </source>
</reference>
<reference key="3">
    <citation type="journal article" date="2017" name="Plant J.">
        <title>Araport11: a complete reannotation of the Arabidopsis thaliana reference genome.</title>
        <authorList>
            <person name="Cheng C.Y."/>
            <person name="Krishnakumar V."/>
            <person name="Chan A.P."/>
            <person name="Thibaud-Nissen F."/>
            <person name="Schobel S."/>
            <person name="Town C.D."/>
        </authorList>
    </citation>
    <scope>GENOME REANNOTATION</scope>
    <source>
        <strain>cv. Columbia</strain>
    </source>
</reference>
<reference key="4">
    <citation type="journal article" date="2002" name="Science">
        <title>Functional annotation of a full-length Arabidopsis cDNA collection.</title>
        <authorList>
            <person name="Seki M."/>
            <person name="Narusaka M."/>
            <person name="Kamiya A."/>
            <person name="Ishida J."/>
            <person name="Satou M."/>
            <person name="Sakurai T."/>
            <person name="Nakajima M."/>
            <person name="Enju A."/>
            <person name="Akiyama K."/>
            <person name="Oono Y."/>
            <person name="Muramatsu M."/>
            <person name="Hayashizaki Y."/>
            <person name="Kawai J."/>
            <person name="Carninci P."/>
            <person name="Itoh M."/>
            <person name="Ishii Y."/>
            <person name="Arakawa T."/>
            <person name="Shibata K."/>
            <person name="Shinagawa A."/>
            <person name="Shinozaki K."/>
        </authorList>
    </citation>
    <scope>NUCLEOTIDE SEQUENCE [LARGE SCALE MRNA] (ISOFORM 1)</scope>
    <source>
        <strain>cv. Columbia</strain>
    </source>
</reference>
<reference key="5">
    <citation type="journal article" date="2003" name="Science">
        <title>Empirical analysis of transcriptional activity in the Arabidopsis genome.</title>
        <authorList>
            <person name="Yamada K."/>
            <person name="Lim J."/>
            <person name="Dale J.M."/>
            <person name="Chen H."/>
            <person name="Shinn P."/>
            <person name="Palm C.J."/>
            <person name="Southwick A.M."/>
            <person name="Wu H.C."/>
            <person name="Kim C.J."/>
            <person name="Nguyen M."/>
            <person name="Pham P.K."/>
            <person name="Cheuk R.F."/>
            <person name="Karlin-Newmann G."/>
            <person name="Liu S.X."/>
            <person name="Lam B."/>
            <person name="Sakano H."/>
            <person name="Wu T."/>
            <person name="Yu G."/>
            <person name="Miranda M."/>
            <person name="Quach H.L."/>
            <person name="Tripp M."/>
            <person name="Chang C.H."/>
            <person name="Lee J.M."/>
            <person name="Toriumi M.J."/>
            <person name="Chan M.M."/>
            <person name="Tang C.C."/>
            <person name="Onodera C.S."/>
            <person name="Deng J.M."/>
            <person name="Akiyama K."/>
            <person name="Ansari Y."/>
            <person name="Arakawa T."/>
            <person name="Banh J."/>
            <person name="Banno F."/>
            <person name="Bowser L."/>
            <person name="Brooks S.Y."/>
            <person name="Carninci P."/>
            <person name="Chao Q."/>
            <person name="Choy N."/>
            <person name="Enju A."/>
            <person name="Goldsmith A.D."/>
            <person name="Gurjal M."/>
            <person name="Hansen N.F."/>
            <person name="Hayashizaki Y."/>
            <person name="Johnson-Hopson C."/>
            <person name="Hsuan V.W."/>
            <person name="Iida K."/>
            <person name="Karnes M."/>
            <person name="Khan S."/>
            <person name="Koesema E."/>
            <person name="Ishida J."/>
            <person name="Jiang P.X."/>
            <person name="Jones T."/>
            <person name="Kawai J."/>
            <person name="Kamiya A."/>
            <person name="Meyers C."/>
            <person name="Nakajima M."/>
            <person name="Narusaka M."/>
            <person name="Seki M."/>
            <person name="Sakurai T."/>
            <person name="Satou M."/>
            <person name="Tamse R."/>
            <person name="Vaysberg M."/>
            <person name="Wallender E.K."/>
            <person name="Wong C."/>
            <person name="Yamamura Y."/>
            <person name="Yuan S."/>
            <person name="Shinozaki K."/>
            <person name="Davis R.W."/>
            <person name="Theologis A."/>
            <person name="Ecker J.R."/>
        </authorList>
    </citation>
    <scope>NUCLEOTIDE SEQUENCE [LARGE SCALE MRNA] (ISOFORM 1)</scope>
    <source>
        <strain>cv. Columbia</strain>
    </source>
</reference>
<reference key="6">
    <citation type="journal article" date="2007" name="Mol. Cell. Proteomics">
        <title>Multidimensional protein identification technology (MudPIT) analysis of ubiquitinated proteins in plants.</title>
        <authorList>
            <person name="Maor R."/>
            <person name="Jones A."/>
            <person name="Nuehse T.S."/>
            <person name="Studholme D.J."/>
            <person name="Peck S.C."/>
            <person name="Shirasu K."/>
        </authorList>
    </citation>
    <scope>UBIQUITINATION [LARGE SCALE ANALYSIS] AT LYS-25</scope>
    <scope>IDENTIFICATION BY MASS SPECTROMETRY [LARGE SCALE ANALYSIS]</scope>
    <source>
        <strain>cv. Landsberg erecta</strain>
    </source>
</reference>
<reference key="7">
    <citation type="journal article" date="2012" name="Proc. Natl. Acad. Sci. U.S.A.">
        <title>Regulation of miRNA abundance by RNA binding protein TOUGH in Arabidopsis.</title>
        <authorList>
            <person name="Ren G."/>
            <person name="Xie M."/>
            <person name="Dou Y."/>
            <person name="Zhang S."/>
            <person name="Zhang C."/>
            <person name="Yu B."/>
        </authorList>
    </citation>
    <scope>FUNCTION</scope>
    <scope>DISRUPTION PHENOTYPE</scope>
</reference>
<gene>
    <name evidence="7" type="primary">TGH</name>
    <name evidence="6" type="ordered locus">At5g23080</name>
    <name evidence="8" type="ORF">MYJ24.7</name>
</gene>
<accession>Q8GXN9</accession>
<accession>Q9FN46</accession>
<protein>
    <recommendedName>
        <fullName>G patch domain-containing protein TGH</fullName>
    </recommendedName>
    <alternativeName>
        <fullName>Protein TOUGH</fullName>
    </alternativeName>
</protein>
<evidence type="ECO:0000255" key="1">
    <source>
        <dbReference type="PROSITE-ProRule" id="PRU00092"/>
    </source>
</evidence>
<evidence type="ECO:0000255" key="2">
    <source>
        <dbReference type="PROSITE-ProRule" id="PRU00263"/>
    </source>
</evidence>
<evidence type="ECO:0000256" key="3">
    <source>
        <dbReference type="SAM" id="MobiDB-lite"/>
    </source>
</evidence>
<evidence type="ECO:0000269" key="4">
    <source>
    </source>
</evidence>
<evidence type="ECO:0000269" key="5">
    <source>
    </source>
</evidence>
<evidence type="ECO:0000312" key="6">
    <source>
        <dbReference type="Araport" id="AT5G23080"/>
    </source>
</evidence>
<evidence type="ECO:0000312" key="7">
    <source>
        <dbReference type="EMBL" id="AED93116.1"/>
    </source>
</evidence>
<evidence type="ECO:0000312" key="8">
    <source>
        <dbReference type="EMBL" id="BAB09825.1"/>
    </source>
</evidence>
<evidence type="ECO:0007744" key="9">
    <source>
    </source>
</evidence>